<name>PYRH_CHLAB</name>
<comment type="function">
    <text evidence="1">Catalyzes the reversible phosphorylation of UMP to UDP.</text>
</comment>
<comment type="catalytic activity">
    <reaction evidence="1">
        <text>UMP + ATP = UDP + ADP</text>
        <dbReference type="Rhea" id="RHEA:24400"/>
        <dbReference type="ChEBI" id="CHEBI:30616"/>
        <dbReference type="ChEBI" id="CHEBI:57865"/>
        <dbReference type="ChEBI" id="CHEBI:58223"/>
        <dbReference type="ChEBI" id="CHEBI:456216"/>
        <dbReference type="EC" id="2.7.4.22"/>
    </reaction>
</comment>
<comment type="activity regulation">
    <text evidence="1">Inhibited by UTP.</text>
</comment>
<comment type="pathway">
    <text evidence="1">Pyrimidine metabolism; CTP biosynthesis via de novo pathway; UDP from UMP (UMPK route): step 1/1.</text>
</comment>
<comment type="subunit">
    <text evidence="1">Homohexamer.</text>
</comment>
<comment type="subcellular location">
    <subcellularLocation>
        <location evidence="1">Cytoplasm</location>
    </subcellularLocation>
</comment>
<comment type="similarity">
    <text evidence="1">Belongs to the UMP kinase family.</text>
</comment>
<dbReference type="EC" id="2.7.4.22" evidence="1"/>
<dbReference type="EMBL" id="CR848038">
    <property type="protein sequence ID" value="CAH63503.1"/>
    <property type="molecule type" value="Genomic_DNA"/>
</dbReference>
<dbReference type="RefSeq" id="WP_011096790.1">
    <property type="nucleotide sequence ID" value="NC_004552.2"/>
</dbReference>
<dbReference type="SMR" id="Q5L765"/>
<dbReference type="KEGG" id="cab:CAB045"/>
<dbReference type="eggNOG" id="COG0528">
    <property type="taxonomic scope" value="Bacteria"/>
</dbReference>
<dbReference type="HOGENOM" id="CLU_033861_0_1_0"/>
<dbReference type="OrthoDB" id="9807458at2"/>
<dbReference type="UniPathway" id="UPA00159">
    <property type="reaction ID" value="UER00275"/>
</dbReference>
<dbReference type="Proteomes" id="UP000001012">
    <property type="component" value="Chromosome"/>
</dbReference>
<dbReference type="GO" id="GO:0005737">
    <property type="term" value="C:cytoplasm"/>
    <property type="evidence" value="ECO:0007669"/>
    <property type="project" value="UniProtKB-SubCell"/>
</dbReference>
<dbReference type="GO" id="GO:0005524">
    <property type="term" value="F:ATP binding"/>
    <property type="evidence" value="ECO:0007669"/>
    <property type="project" value="UniProtKB-KW"/>
</dbReference>
<dbReference type="GO" id="GO:0033862">
    <property type="term" value="F:UMP kinase activity"/>
    <property type="evidence" value="ECO:0007669"/>
    <property type="project" value="UniProtKB-EC"/>
</dbReference>
<dbReference type="GO" id="GO:0044210">
    <property type="term" value="P:'de novo' CTP biosynthetic process"/>
    <property type="evidence" value="ECO:0007669"/>
    <property type="project" value="UniProtKB-UniRule"/>
</dbReference>
<dbReference type="GO" id="GO:0006225">
    <property type="term" value="P:UDP biosynthetic process"/>
    <property type="evidence" value="ECO:0007669"/>
    <property type="project" value="TreeGrafter"/>
</dbReference>
<dbReference type="CDD" id="cd04254">
    <property type="entry name" value="AAK_UMPK-PyrH-Ec"/>
    <property type="match status" value="1"/>
</dbReference>
<dbReference type="FunFam" id="3.40.1160.10:FF:000001">
    <property type="entry name" value="Uridylate kinase"/>
    <property type="match status" value="1"/>
</dbReference>
<dbReference type="Gene3D" id="3.40.1160.10">
    <property type="entry name" value="Acetylglutamate kinase-like"/>
    <property type="match status" value="1"/>
</dbReference>
<dbReference type="HAMAP" id="MF_01220_B">
    <property type="entry name" value="PyrH_B"/>
    <property type="match status" value="1"/>
</dbReference>
<dbReference type="InterPro" id="IPR036393">
    <property type="entry name" value="AceGlu_kinase-like_sf"/>
</dbReference>
<dbReference type="InterPro" id="IPR001048">
    <property type="entry name" value="Asp/Glu/Uridylate_kinase"/>
</dbReference>
<dbReference type="InterPro" id="IPR011817">
    <property type="entry name" value="Uridylate_kinase"/>
</dbReference>
<dbReference type="InterPro" id="IPR015963">
    <property type="entry name" value="Uridylate_kinase_bac"/>
</dbReference>
<dbReference type="NCBIfam" id="TIGR02075">
    <property type="entry name" value="pyrH_bact"/>
    <property type="match status" value="1"/>
</dbReference>
<dbReference type="PANTHER" id="PTHR42833">
    <property type="entry name" value="URIDYLATE KINASE"/>
    <property type="match status" value="1"/>
</dbReference>
<dbReference type="PANTHER" id="PTHR42833:SF4">
    <property type="entry name" value="URIDYLATE KINASE PUMPKIN, CHLOROPLASTIC"/>
    <property type="match status" value="1"/>
</dbReference>
<dbReference type="Pfam" id="PF00696">
    <property type="entry name" value="AA_kinase"/>
    <property type="match status" value="1"/>
</dbReference>
<dbReference type="PIRSF" id="PIRSF005650">
    <property type="entry name" value="Uridylate_kin"/>
    <property type="match status" value="1"/>
</dbReference>
<dbReference type="SUPFAM" id="SSF53633">
    <property type="entry name" value="Carbamate kinase-like"/>
    <property type="match status" value="1"/>
</dbReference>
<evidence type="ECO:0000255" key="1">
    <source>
        <dbReference type="HAMAP-Rule" id="MF_01220"/>
    </source>
</evidence>
<sequence>MSKRITRVLFKISGESLSTDSGNRIDEVRLSRLVAELRAVRNCDIETALVIGGGNILRGLAQQKELQINRVSADQMGMLATLINGMAVADALKADDIPCLLTSTLSCPQLADLYTPQKSEEALNQGKIVICTTGTGSPYLTTDTGAALRACELKVDILLKATMHVDGVYNKDPRSFSDAVKYDRISFKDFLAQGLGVMDASAVSLCMDSNIPIRVFSFVKHSLEQAIFDENIGTLIGEEATHVHSS</sequence>
<protein>
    <recommendedName>
        <fullName evidence="1">Uridylate kinase</fullName>
        <shortName evidence="1">UK</shortName>
        <ecNumber evidence="1">2.7.4.22</ecNumber>
    </recommendedName>
    <alternativeName>
        <fullName evidence="1">Uridine monophosphate kinase</fullName>
        <shortName evidence="1">UMP kinase</shortName>
        <shortName evidence="1">UMPK</shortName>
    </alternativeName>
</protein>
<organism>
    <name type="scientific">Chlamydia abortus (strain DSM 27085 / S26/3)</name>
    <name type="common">Chlamydophila abortus</name>
    <dbReference type="NCBI Taxonomy" id="218497"/>
    <lineage>
        <taxon>Bacteria</taxon>
        <taxon>Pseudomonadati</taxon>
        <taxon>Chlamydiota</taxon>
        <taxon>Chlamydiia</taxon>
        <taxon>Chlamydiales</taxon>
        <taxon>Chlamydiaceae</taxon>
        <taxon>Chlamydia/Chlamydophila group</taxon>
        <taxon>Chlamydia</taxon>
    </lineage>
</organism>
<accession>Q5L765</accession>
<keyword id="KW-0067">ATP-binding</keyword>
<keyword id="KW-0963">Cytoplasm</keyword>
<keyword id="KW-0418">Kinase</keyword>
<keyword id="KW-0547">Nucleotide-binding</keyword>
<keyword id="KW-0665">Pyrimidine biosynthesis</keyword>
<keyword id="KW-0808">Transferase</keyword>
<reference key="1">
    <citation type="journal article" date="2005" name="Genome Res.">
        <title>The Chlamydophila abortus genome sequence reveals an array of variable proteins that contribute to interspecies variation.</title>
        <authorList>
            <person name="Thomson N.R."/>
            <person name="Yeats C."/>
            <person name="Bell K."/>
            <person name="Holden M.T.G."/>
            <person name="Bentley S.D."/>
            <person name="Livingstone M."/>
            <person name="Cerdeno-Tarraga A.-M."/>
            <person name="Harris B."/>
            <person name="Doggett J."/>
            <person name="Ormond D."/>
            <person name="Mungall K."/>
            <person name="Clarke K."/>
            <person name="Feltwell T."/>
            <person name="Hance Z."/>
            <person name="Sanders M."/>
            <person name="Quail M.A."/>
            <person name="Price C."/>
            <person name="Barrell B.G."/>
            <person name="Parkhill J."/>
            <person name="Longbottom D."/>
        </authorList>
    </citation>
    <scope>NUCLEOTIDE SEQUENCE [LARGE SCALE GENOMIC DNA]</scope>
    <source>
        <strain>DSM 27085 / S26/3</strain>
    </source>
</reference>
<proteinExistence type="inferred from homology"/>
<gene>
    <name evidence="1" type="primary">pyrH</name>
    <name type="ordered locus">CAB045</name>
</gene>
<feature type="chain" id="PRO_0000323822" description="Uridylate kinase">
    <location>
        <begin position="1"/>
        <end position="246"/>
    </location>
</feature>
<feature type="binding site" evidence="1">
    <location>
        <begin position="11"/>
        <end position="14"/>
    </location>
    <ligand>
        <name>ATP</name>
        <dbReference type="ChEBI" id="CHEBI:30616"/>
    </ligand>
</feature>
<feature type="binding site" evidence="1">
    <location>
        <position position="53"/>
    </location>
    <ligand>
        <name>UMP</name>
        <dbReference type="ChEBI" id="CHEBI:57865"/>
    </ligand>
</feature>
<feature type="binding site" evidence="1">
    <location>
        <position position="54"/>
    </location>
    <ligand>
        <name>ATP</name>
        <dbReference type="ChEBI" id="CHEBI:30616"/>
    </ligand>
</feature>
<feature type="binding site" evidence="1">
    <location>
        <position position="58"/>
    </location>
    <ligand>
        <name>ATP</name>
        <dbReference type="ChEBI" id="CHEBI:30616"/>
    </ligand>
</feature>
<feature type="binding site" evidence="1">
    <location>
        <position position="74"/>
    </location>
    <ligand>
        <name>UMP</name>
        <dbReference type="ChEBI" id="CHEBI:57865"/>
    </ligand>
</feature>
<feature type="binding site" evidence="1">
    <location>
        <begin position="135"/>
        <end position="142"/>
    </location>
    <ligand>
        <name>UMP</name>
        <dbReference type="ChEBI" id="CHEBI:57865"/>
    </ligand>
</feature>
<feature type="binding site" evidence="1">
    <location>
        <position position="162"/>
    </location>
    <ligand>
        <name>ATP</name>
        <dbReference type="ChEBI" id="CHEBI:30616"/>
    </ligand>
</feature>
<feature type="binding site" evidence="1">
    <location>
        <position position="169"/>
    </location>
    <ligand>
        <name>ATP</name>
        <dbReference type="ChEBI" id="CHEBI:30616"/>
    </ligand>
</feature>
<feature type="binding site" evidence="1">
    <location>
        <position position="172"/>
    </location>
    <ligand>
        <name>ATP</name>
        <dbReference type="ChEBI" id="CHEBI:30616"/>
    </ligand>
</feature>